<organism>
    <name type="scientific">Arabidopsis thaliana</name>
    <name type="common">Mouse-ear cress</name>
    <dbReference type="NCBI Taxonomy" id="3702"/>
    <lineage>
        <taxon>Eukaryota</taxon>
        <taxon>Viridiplantae</taxon>
        <taxon>Streptophyta</taxon>
        <taxon>Embryophyta</taxon>
        <taxon>Tracheophyta</taxon>
        <taxon>Spermatophyta</taxon>
        <taxon>Magnoliopsida</taxon>
        <taxon>eudicotyledons</taxon>
        <taxon>Gunneridae</taxon>
        <taxon>Pentapetalae</taxon>
        <taxon>rosids</taxon>
        <taxon>malvids</taxon>
        <taxon>Brassicales</taxon>
        <taxon>Brassicaceae</taxon>
        <taxon>Camelineae</taxon>
        <taxon>Arabidopsis</taxon>
    </lineage>
</organism>
<dbReference type="EMBL" id="AC005388">
    <property type="protein sequence ID" value="AAC64883.1"/>
    <property type="molecule type" value="Genomic_DNA"/>
</dbReference>
<dbReference type="EMBL" id="CP002684">
    <property type="protein sequence ID" value="AEE33135.1"/>
    <property type="molecule type" value="Genomic_DNA"/>
</dbReference>
<dbReference type="EMBL" id="AY094023">
    <property type="protein sequence ID" value="AAM16179.1"/>
    <property type="molecule type" value="mRNA"/>
</dbReference>
<dbReference type="EMBL" id="AF411788">
    <property type="protein sequence ID" value="AAL06478.1"/>
    <property type="molecule type" value="mRNA"/>
</dbReference>
<dbReference type="EMBL" id="AY085671">
    <property type="protein sequence ID" value="AAM62890.1"/>
    <property type="molecule type" value="mRNA"/>
</dbReference>
<dbReference type="PIR" id="A96589">
    <property type="entry name" value="A96589"/>
</dbReference>
<dbReference type="SMR" id="Q9S9K7"/>
<dbReference type="BioGRID" id="27135">
    <property type="interactions" value="1"/>
</dbReference>
<dbReference type="FunCoup" id="Q9S9K7">
    <property type="interactions" value="2035"/>
</dbReference>
<dbReference type="IntAct" id="Q9S9K7">
    <property type="interactions" value="1"/>
</dbReference>
<dbReference type="STRING" id="3702.Q9S9K7"/>
<dbReference type="iPTMnet" id="Q9S9K7"/>
<dbReference type="PaxDb" id="3702-AT1G54690.1"/>
<dbReference type="ProteomicsDB" id="247348"/>
<dbReference type="EnsemblPlants" id="AT1G54690.1">
    <property type="protein sequence ID" value="AT1G54690.1"/>
    <property type="gene ID" value="AT1G54690"/>
</dbReference>
<dbReference type="GeneID" id="841910"/>
<dbReference type="Gramene" id="AT1G54690.1">
    <property type="protein sequence ID" value="AT1G54690.1"/>
    <property type="gene ID" value="AT1G54690"/>
</dbReference>
<dbReference type="KEGG" id="ath:AT1G54690"/>
<dbReference type="Araport" id="AT1G54690"/>
<dbReference type="TAIR" id="AT1G54690">
    <property type="gene designation" value="GAMMA-H2AX"/>
</dbReference>
<dbReference type="eggNOG" id="KOG1756">
    <property type="taxonomic scope" value="Eukaryota"/>
</dbReference>
<dbReference type="HOGENOM" id="CLU_062828_3_0_1"/>
<dbReference type="InParanoid" id="Q9S9K7"/>
<dbReference type="OMA" id="YWARRTA"/>
<dbReference type="OrthoDB" id="9421954at2759"/>
<dbReference type="PhylomeDB" id="Q9S9K7"/>
<dbReference type="CD-CODE" id="4299E36E">
    <property type="entry name" value="Nucleolus"/>
</dbReference>
<dbReference type="PRO" id="PR:Q9S9K7"/>
<dbReference type="Proteomes" id="UP000006548">
    <property type="component" value="Chromosome 1"/>
</dbReference>
<dbReference type="ExpressionAtlas" id="Q9S9K7">
    <property type="expression patterns" value="baseline and differential"/>
</dbReference>
<dbReference type="GO" id="GO:0005730">
    <property type="term" value="C:nucleolus"/>
    <property type="evidence" value="ECO:0007005"/>
    <property type="project" value="TAIR"/>
</dbReference>
<dbReference type="GO" id="GO:0000786">
    <property type="term" value="C:nucleosome"/>
    <property type="evidence" value="ECO:0007669"/>
    <property type="project" value="UniProtKB-KW"/>
</dbReference>
<dbReference type="GO" id="GO:0005634">
    <property type="term" value="C:nucleus"/>
    <property type="evidence" value="ECO:0000314"/>
    <property type="project" value="TAIR"/>
</dbReference>
<dbReference type="GO" id="GO:0003677">
    <property type="term" value="F:DNA binding"/>
    <property type="evidence" value="ECO:0007669"/>
    <property type="project" value="UniProtKB-KW"/>
</dbReference>
<dbReference type="GO" id="GO:0046982">
    <property type="term" value="F:protein heterodimerization activity"/>
    <property type="evidence" value="ECO:0007669"/>
    <property type="project" value="InterPro"/>
</dbReference>
<dbReference type="GO" id="GO:0030527">
    <property type="term" value="F:structural constituent of chromatin"/>
    <property type="evidence" value="ECO:0007669"/>
    <property type="project" value="InterPro"/>
</dbReference>
<dbReference type="CDD" id="cd00074">
    <property type="entry name" value="HFD_H2A"/>
    <property type="match status" value="1"/>
</dbReference>
<dbReference type="FunFam" id="1.10.20.10:FF:000009">
    <property type="entry name" value="Histone H2A"/>
    <property type="match status" value="1"/>
</dbReference>
<dbReference type="Gene3D" id="1.10.20.10">
    <property type="entry name" value="Histone, subunit A"/>
    <property type="match status" value="1"/>
</dbReference>
<dbReference type="InterPro" id="IPR009072">
    <property type="entry name" value="Histone-fold"/>
</dbReference>
<dbReference type="InterPro" id="IPR002119">
    <property type="entry name" value="Histone_H2A"/>
</dbReference>
<dbReference type="InterPro" id="IPR007125">
    <property type="entry name" value="Histone_H2A/H2B/H3"/>
</dbReference>
<dbReference type="InterPro" id="IPR032454">
    <property type="entry name" value="Histone_H2A_C"/>
</dbReference>
<dbReference type="InterPro" id="IPR032458">
    <property type="entry name" value="Histone_H2A_CS"/>
</dbReference>
<dbReference type="PANTHER" id="PTHR23430">
    <property type="entry name" value="HISTONE H2A"/>
    <property type="match status" value="1"/>
</dbReference>
<dbReference type="Pfam" id="PF00125">
    <property type="entry name" value="Histone"/>
    <property type="match status" value="1"/>
</dbReference>
<dbReference type="Pfam" id="PF16211">
    <property type="entry name" value="Histone_H2A_C"/>
    <property type="match status" value="1"/>
</dbReference>
<dbReference type="PRINTS" id="PR00620">
    <property type="entry name" value="HISTONEH2A"/>
</dbReference>
<dbReference type="SMART" id="SM00414">
    <property type="entry name" value="H2A"/>
    <property type="match status" value="1"/>
</dbReference>
<dbReference type="SUPFAM" id="SSF47113">
    <property type="entry name" value="Histone-fold"/>
    <property type="match status" value="1"/>
</dbReference>
<dbReference type="PROSITE" id="PS00046">
    <property type="entry name" value="HISTONE_H2A"/>
    <property type="match status" value="1"/>
</dbReference>
<gene>
    <name type="ordered locus">At1g54690</name>
    <name type="ORF">T22H22.12</name>
</gene>
<sequence length="142" mass="14783">MSSGAGSGTTKGGRGKPKATKSVSRSSKAGLQFPVGRIARFLKAGKYAERVGAGAPVYLSAVLEYLAAEVLELAGNAARDNKKTRIVPRHIQLAVRNDEELSKLLGSVTIANGGVLPNIHQTLLPSKVGKNKGDIGSASQEF</sequence>
<feature type="chain" id="PRO_0000055199" description="Probable histone H2AXb">
    <location>
        <begin position="1"/>
        <end position="142"/>
    </location>
</feature>
<feature type="region of interest" description="Disordered" evidence="2">
    <location>
        <begin position="1"/>
        <end position="28"/>
    </location>
</feature>
<feature type="short sequence motif" description="[ST]-Q motif">
    <location>
        <begin position="139"/>
        <end position="140"/>
    </location>
</feature>
<feature type="compositionally biased region" description="Gly residues" evidence="2">
    <location>
        <begin position="1"/>
        <end position="12"/>
    </location>
</feature>
<feature type="modified residue" description="Phosphoserine; by ATM and ATR" evidence="4">
    <location>
        <position position="139"/>
    </location>
</feature>
<accession>Q9S9K7</accession>
<keyword id="KW-0158">Chromosome</keyword>
<keyword id="KW-0238">DNA-binding</keyword>
<keyword id="KW-0544">Nucleosome core</keyword>
<keyword id="KW-0539">Nucleus</keyword>
<keyword id="KW-0597">Phosphoprotein</keyword>
<keyword id="KW-1185">Reference proteome</keyword>
<reference key="1">
    <citation type="journal article" date="2000" name="Nature">
        <title>Sequence and analysis of chromosome 1 of the plant Arabidopsis thaliana.</title>
        <authorList>
            <person name="Theologis A."/>
            <person name="Ecker J.R."/>
            <person name="Palm C.J."/>
            <person name="Federspiel N.A."/>
            <person name="Kaul S."/>
            <person name="White O."/>
            <person name="Alonso J."/>
            <person name="Altafi H."/>
            <person name="Araujo R."/>
            <person name="Bowman C.L."/>
            <person name="Brooks S.Y."/>
            <person name="Buehler E."/>
            <person name="Chan A."/>
            <person name="Chao Q."/>
            <person name="Chen H."/>
            <person name="Cheuk R.F."/>
            <person name="Chin C.W."/>
            <person name="Chung M.K."/>
            <person name="Conn L."/>
            <person name="Conway A.B."/>
            <person name="Conway A.R."/>
            <person name="Creasy T.H."/>
            <person name="Dewar K."/>
            <person name="Dunn P."/>
            <person name="Etgu P."/>
            <person name="Feldblyum T.V."/>
            <person name="Feng J.-D."/>
            <person name="Fong B."/>
            <person name="Fujii C.Y."/>
            <person name="Gill J.E."/>
            <person name="Goldsmith A.D."/>
            <person name="Haas B."/>
            <person name="Hansen N.F."/>
            <person name="Hughes B."/>
            <person name="Huizar L."/>
            <person name="Hunter J.L."/>
            <person name="Jenkins J."/>
            <person name="Johnson-Hopson C."/>
            <person name="Khan S."/>
            <person name="Khaykin E."/>
            <person name="Kim C.J."/>
            <person name="Koo H.L."/>
            <person name="Kremenetskaia I."/>
            <person name="Kurtz D.B."/>
            <person name="Kwan A."/>
            <person name="Lam B."/>
            <person name="Langin-Hooper S."/>
            <person name="Lee A."/>
            <person name="Lee J.M."/>
            <person name="Lenz C.A."/>
            <person name="Li J.H."/>
            <person name="Li Y.-P."/>
            <person name="Lin X."/>
            <person name="Liu S.X."/>
            <person name="Liu Z.A."/>
            <person name="Luros J.S."/>
            <person name="Maiti R."/>
            <person name="Marziali A."/>
            <person name="Militscher J."/>
            <person name="Miranda M."/>
            <person name="Nguyen M."/>
            <person name="Nierman W.C."/>
            <person name="Osborne B.I."/>
            <person name="Pai G."/>
            <person name="Peterson J."/>
            <person name="Pham P.K."/>
            <person name="Rizzo M."/>
            <person name="Rooney T."/>
            <person name="Rowley D."/>
            <person name="Sakano H."/>
            <person name="Salzberg S.L."/>
            <person name="Schwartz J.R."/>
            <person name="Shinn P."/>
            <person name="Southwick A.M."/>
            <person name="Sun H."/>
            <person name="Tallon L.J."/>
            <person name="Tambunga G."/>
            <person name="Toriumi M.J."/>
            <person name="Town C.D."/>
            <person name="Utterback T."/>
            <person name="Van Aken S."/>
            <person name="Vaysberg M."/>
            <person name="Vysotskaia V.S."/>
            <person name="Walker M."/>
            <person name="Wu D."/>
            <person name="Yu G."/>
            <person name="Fraser C.M."/>
            <person name="Venter J.C."/>
            <person name="Davis R.W."/>
        </authorList>
    </citation>
    <scope>NUCLEOTIDE SEQUENCE [LARGE SCALE GENOMIC DNA]</scope>
    <source>
        <strain>cv. Columbia</strain>
    </source>
</reference>
<reference key="2">
    <citation type="journal article" date="2017" name="Plant J.">
        <title>Araport11: a complete reannotation of the Arabidopsis thaliana reference genome.</title>
        <authorList>
            <person name="Cheng C.Y."/>
            <person name="Krishnakumar V."/>
            <person name="Chan A.P."/>
            <person name="Thibaud-Nissen F."/>
            <person name="Schobel S."/>
            <person name="Town C.D."/>
        </authorList>
    </citation>
    <scope>GENOME REANNOTATION</scope>
    <source>
        <strain>cv. Columbia</strain>
    </source>
</reference>
<reference key="3">
    <citation type="journal article" date="2003" name="Science">
        <title>Empirical analysis of transcriptional activity in the Arabidopsis genome.</title>
        <authorList>
            <person name="Yamada K."/>
            <person name="Lim J."/>
            <person name="Dale J.M."/>
            <person name="Chen H."/>
            <person name="Shinn P."/>
            <person name="Palm C.J."/>
            <person name="Southwick A.M."/>
            <person name="Wu H.C."/>
            <person name="Kim C.J."/>
            <person name="Nguyen M."/>
            <person name="Pham P.K."/>
            <person name="Cheuk R.F."/>
            <person name="Karlin-Newmann G."/>
            <person name="Liu S.X."/>
            <person name="Lam B."/>
            <person name="Sakano H."/>
            <person name="Wu T."/>
            <person name="Yu G."/>
            <person name="Miranda M."/>
            <person name="Quach H.L."/>
            <person name="Tripp M."/>
            <person name="Chang C.H."/>
            <person name="Lee J.M."/>
            <person name="Toriumi M.J."/>
            <person name="Chan M.M."/>
            <person name="Tang C.C."/>
            <person name="Onodera C.S."/>
            <person name="Deng J.M."/>
            <person name="Akiyama K."/>
            <person name="Ansari Y."/>
            <person name="Arakawa T."/>
            <person name="Banh J."/>
            <person name="Banno F."/>
            <person name="Bowser L."/>
            <person name="Brooks S.Y."/>
            <person name="Carninci P."/>
            <person name="Chao Q."/>
            <person name="Choy N."/>
            <person name="Enju A."/>
            <person name="Goldsmith A.D."/>
            <person name="Gurjal M."/>
            <person name="Hansen N.F."/>
            <person name="Hayashizaki Y."/>
            <person name="Johnson-Hopson C."/>
            <person name="Hsuan V.W."/>
            <person name="Iida K."/>
            <person name="Karnes M."/>
            <person name="Khan S."/>
            <person name="Koesema E."/>
            <person name="Ishida J."/>
            <person name="Jiang P.X."/>
            <person name="Jones T."/>
            <person name="Kawai J."/>
            <person name="Kamiya A."/>
            <person name="Meyers C."/>
            <person name="Nakajima M."/>
            <person name="Narusaka M."/>
            <person name="Seki M."/>
            <person name="Sakurai T."/>
            <person name="Satou M."/>
            <person name="Tamse R."/>
            <person name="Vaysberg M."/>
            <person name="Wallender E.K."/>
            <person name="Wong C."/>
            <person name="Yamamura Y."/>
            <person name="Yuan S."/>
            <person name="Shinozaki K."/>
            <person name="Davis R.W."/>
            <person name="Theologis A."/>
            <person name="Ecker J.R."/>
        </authorList>
    </citation>
    <scope>NUCLEOTIDE SEQUENCE [LARGE SCALE MRNA]</scope>
    <source>
        <strain>cv. Columbia</strain>
    </source>
</reference>
<reference key="4">
    <citation type="submission" date="2002-03" db="EMBL/GenBank/DDBJ databases">
        <title>Full-length cDNA from Arabidopsis thaliana.</title>
        <authorList>
            <person name="Brover V.V."/>
            <person name="Troukhan M.E."/>
            <person name="Alexandrov N.A."/>
            <person name="Lu Y.-P."/>
            <person name="Flavell R.B."/>
            <person name="Feldmann K.A."/>
        </authorList>
    </citation>
    <scope>NUCLEOTIDE SEQUENCE [LARGE SCALE MRNA]</scope>
</reference>
<reference key="5">
    <citation type="journal article" date="2005" name="Mol. Biol. Cell">
        <title>Ionizing radiation-dependent gamma-H2AX focus formation requires ataxia telangiectasia mutated and ataxia telangiectasia mutated and Rad3-related.</title>
        <authorList>
            <person name="Friesner J.D."/>
            <person name="Liu B."/>
            <person name="Culligan K."/>
            <person name="Britt A.B."/>
        </authorList>
    </citation>
    <scope>PHOSPHORYLATION</scope>
</reference>
<reference key="6">
    <citation type="journal article" date="2006" name="Plant Cell">
        <title>Constitutive expression exposes functional redundancy between the Arabidopsis histone H2A gene HTA1 and other H2A gene family members.</title>
        <authorList>
            <person name="Yi H."/>
            <person name="Sardesai N."/>
            <person name="Fujinuma T."/>
            <person name="Chan C.-W."/>
            <person name="Veena X."/>
            <person name="Gelvin S.B."/>
        </authorList>
    </citation>
    <scope>TISSUE SPECIFICITY</scope>
    <scope>NOMENCLATURE</scope>
</reference>
<proteinExistence type="evidence at protein level"/>
<comment type="function">
    <text evidence="1">Variant histone H2A which replaces conventional H2A in a subset of nucleosomes. Nucleosomes wrap and compact DNA into chromatin, limiting DNA accessibility to the cellular machineries which require DNA as a template. Histones thereby play a central role in transcription regulation, DNA repair, DNA replication and chromosomal stability. DNA accessibility is regulated via a complex set of post-translational modifications of histones, also called histone code, and nucleosome remodeling. Required for checkpoint-mediated arrest of cell cycle progression in response to low doses of ionizing radiation and for efficient repair of DNA double strand breaks (DSBs) specifically when modified by C-terminal phosphorylation (By similarity).</text>
</comment>
<comment type="subunit">
    <text evidence="1">The nucleosome is a histone octamer containing two molecules each of H2A, H2B, H3 and H4 assembled in one H3-H4 heterotetramer and two H2A-H2B heterodimers. The octamer wraps approximately 147 bp of DNA. Interacts with numerous proteins required for DNA damage signaling and repair when phosphorylated on Ser-139 (By similarity).</text>
</comment>
<comment type="subcellular location">
    <subcellularLocation>
        <location evidence="1">Nucleus</location>
    </subcellularLocation>
    <subcellularLocation>
        <location evidence="1">Chromosome</location>
    </subcellularLocation>
</comment>
<comment type="tissue specificity">
    <text evidence="3">Expressed in meristems and dividing cells.</text>
</comment>
<comment type="domain">
    <text>The [ST]-Q motif constitutes a recognition sequence for kinases from the PI3/PI4-kinase family.</text>
</comment>
<comment type="PTM">
    <text evidence="1">Phosphorylated to form H2AXS139ph (gamma-H2AX) in response to DNA double strand breaks (DSBs) generated by exogenous genotoxic agents and by stalled replication forks, and may also occur during meiotic recombination events. Phosphorylation can extend up to several thousand nucleosomes from the actual site of the DSB and may mark the surrounding chromatin for recruitment of proteins required for DNA damage signaling and repair. Widespread phosphorylation may also serve to amplify the damage signal or aid repair of persistent lesions. H2AXS139ph in response to ionizing radiation is mediated by ATM while defects in DNA replication induce H2AXS139ph subsequent to activation of ATR. Dephosphorylation of H2AXS139ph by PP2A is required for DNA DSB repair (By similarity).</text>
</comment>
<comment type="similarity">
    <text evidence="4">Belongs to the histone H2A family.</text>
</comment>
<comment type="caution">
    <text evidence="4">To ensure consistency between histone entries, we follow the 'Brno' nomenclature for histone modifications, with positions referring to those used in the literature for the 'closest' model organism. Due to slight variations in histone sequences between organisms and to the presence of initiator methionine in UniProtKB/Swiss-Prot sequences, the actual positions of modified amino acids in the sequence generally differ. In this entry the following conventions are used: H2AXS139ph = phosphorylated Ser-139.</text>
</comment>
<evidence type="ECO:0000250" key="1"/>
<evidence type="ECO:0000256" key="2">
    <source>
        <dbReference type="SAM" id="MobiDB-lite"/>
    </source>
</evidence>
<evidence type="ECO:0000269" key="3">
    <source>
    </source>
</evidence>
<evidence type="ECO:0000305" key="4"/>
<protein>
    <recommendedName>
        <fullName>Probable histone H2AXb</fullName>
    </recommendedName>
    <alternativeName>
        <fullName>HTA3</fullName>
    </alternativeName>
</protein>
<name>H2AXB_ARATH</name>